<accession>Q98P28</accession>
<name>Y9637_RHILO</name>
<keyword id="KW-0614">Plasmid</keyword>
<organism>
    <name type="scientific">Mesorhizobium japonicum (strain LMG 29417 / CECT 9101 / MAFF 303099)</name>
    <name type="common">Mesorhizobium loti (strain MAFF 303099)</name>
    <dbReference type="NCBI Taxonomy" id="266835"/>
    <lineage>
        <taxon>Bacteria</taxon>
        <taxon>Pseudomonadati</taxon>
        <taxon>Pseudomonadota</taxon>
        <taxon>Alphaproteobacteria</taxon>
        <taxon>Hyphomicrobiales</taxon>
        <taxon>Phyllobacteriaceae</taxon>
        <taxon>Mesorhizobium</taxon>
    </lineage>
</organism>
<proteinExistence type="inferred from homology"/>
<comment type="similarity">
    <text evidence="1">Belongs to the UPF0229 family.</text>
</comment>
<reference key="1">
    <citation type="journal article" date="2000" name="DNA Res.">
        <title>Complete genome structure of the nitrogen-fixing symbiotic bacterium Mesorhizobium loti.</title>
        <authorList>
            <person name="Kaneko T."/>
            <person name="Nakamura Y."/>
            <person name="Sato S."/>
            <person name="Asamizu E."/>
            <person name="Kato T."/>
            <person name="Sasamoto S."/>
            <person name="Watanabe A."/>
            <person name="Idesawa K."/>
            <person name="Ishikawa A."/>
            <person name="Kawashima K."/>
            <person name="Kimura T."/>
            <person name="Kishida Y."/>
            <person name="Kiyokawa C."/>
            <person name="Kohara M."/>
            <person name="Matsumoto M."/>
            <person name="Matsuno A."/>
            <person name="Mochizuki Y."/>
            <person name="Nakayama S."/>
            <person name="Nakazaki N."/>
            <person name="Shimpo S."/>
            <person name="Sugimoto M."/>
            <person name="Takeuchi C."/>
            <person name="Yamada M."/>
            <person name="Tabata S."/>
        </authorList>
    </citation>
    <scope>NUCLEOTIDE SEQUENCE [LARGE SCALE GENOMIC DNA]</scope>
    <source>
        <strain>LMG 29417 / CECT 9101 / MAFF 303099</strain>
    </source>
</reference>
<geneLocation type="plasmid">
    <name>pMLb</name>
</geneLocation>
<protein>
    <recommendedName>
        <fullName evidence="1">UPF0229 protein mll9637</fullName>
    </recommendedName>
</protein>
<dbReference type="EMBL" id="AP003017">
    <property type="protein sequence ID" value="BAB54827.1"/>
    <property type="molecule type" value="Genomic_DNA"/>
</dbReference>
<dbReference type="RefSeq" id="WP_010916149.1">
    <property type="nucleotide sequence ID" value="NC_002682.1"/>
</dbReference>
<dbReference type="SMR" id="Q98P28"/>
<dbReference type="KEGG" id="mlo:mll9637"/>
<dbReference type="eggNOG" id="COG2718">
    <property type="taxonomic scope" value="Bacteria"/>
</dbReference>
<dbReference type="HOGENOM" id="CLU_049702_0_0_5"/>
<dbReference type="Proteomes" id="UP000000552">
    <property type="component" value="Plasmid pMLb"/>
</dbReference>
<dbReference type="HAMAP" id="MF_01232">
    <property type="entry name" value="UPF0229"/>
    <property type="match status" value="1"/>
</dbReference>
<dbReference type="InterPro" id="IPR006698">
    <property type="entry name" value="UPF0229"/>
</dbReference>
<dbReference type="NCBIfam" id="NF003707">
    <property type="entry name" value="PRK05325.1-2"/>
    <property type="match status" value="1"/>
</dbReference>
<dbReference type="NCBIfam" id="NF003708">
    <property type="entry name" value="PRK05325.1-3"/>
    <property type="match status" value="1"/>
</dbReference>
<dbReference type="PANTHER" id="PTHR30510">
    <property type="entry name" value="UPF0229 PROTEIN YEAH"/>
    <property type="match status" value="1"/>
</dbReference>
<dbReference type="PANTHER" id="PTHR30510:SF2">
    <property type="entry name" value="UPF0229 PROTEIN YEAH"/>
    <property type="match status" value="1"/>
</dbReference>
<dbReference type="Pfam" id="PF04285">
    <property type="entry name" value="DUF444"/>
    <property type="match status" value="1"/>
</dbReference>
<feature type="chain" id="PRO_0000068202" description="UPF0229 protein mll9637">
    <location>
        <begin position="1"/>
        <end position="436"/>
    </location>
</feature>
<feature type="region of interest" description="Disordered" evidence="2">
    <location>
        <begin position="54"/>
        <end position="103"/>
    </location>
</feature>
<sequence>MPIFIDRRLNPKDKSLGNRQRFLRRAREELKRSIRDKVRAGGIAELDREHVVPIPRKGTGEPTFGDDKESGRRQHILPGNRTFSSGDLIPKPGGGGGYGSAAGTTESEDDFRFVLSREEVLDLFFEDLELPDLVKLNLKQVLSFKPRRAGFAASGAPTNINVGRTMRNSHGRRIALRRPKQAELDAIARQIAELEAKPASALVRERIAALREALDRLERRRKRIAYVDPVDIRFNRFDPQPLPNANAVMFCLMDVSGSMGEREKDLAKRFFVLLHLFLTRRYERTDIVFIRHTHLAKEVDEHTFFYHTESGGTVVSTALEEMHRIIEQRYPVAEWNIYAAQASDGDNFAGDSERCIELLDRKLMRLCQYFAYVEIIDERESHIFGATENGTSLWRAYNAVDGKWPNFQMRRIAAPADIYPVFRQLFARQPDLRKSA</sequence>
<gene>
    <name type="ordered locus">mll9637</name>
</gene>
<evidence type="ECO:0000255" key="1">
    <source>
        <dbReference type="HAMAP-Rule" id="MF_01232"/>
    </source>
</evidence>
<evidence type="ECO:0000256" key="2">
    <source>
        <dbReference type="SAM" id="MobiDB-lite"/>
    </source>
</evidence>